<name>RS7_ALBFT</name>
<dbReference type="EMBL" id="CP000267">
    <property type="protein sequence ID" value="ABD71499.1"/>
    <property type="molecule type" value="Genomic_DNA"/>
</dbReference>
<dbReference type="RefSeq" id="WP_011466062.1">
    <property type="nucleotide sequence ID" value="NC_007908.1"/>
</dbReference>
<dbReference type="SMR" id="Q21RV4"/>
<dbReference type="STRING" id="338969.Rfer_3799"/>
<dbReference type="KEGG" id="rfr:Rfer_3799"/>
<dbReference type="eggNOG" id="COG0049">
    <property type="taxonomic scope" value="Bacteria"/>
</dbReference>
<dbReference type="HOGENOM" id="CLU_072226_1_1_4"/>
<dbReference type="OrthoDB" id="9807653at2"/>
<dbReference type="Proteomes" id="UP000008332">
    <property type="component" value="Chromosome"/>
</dbReference>
<dbReference type="GO" id="GO:0015935">
    <property type="term" value="C:small ribosomal subunit"/>
    <property type="evidence" value="ECO:0007669"/>
    <property type="project" value="InterPro"/>
</dbReference>
<dbReference type="GO" id="GO:0019843">
    <property type="term" value="F:rRNA binding"/>
    <property type="evidence" value="ECO:0007669"/>
    <property type="project" value="UniProtKB-UniRule"/>
</dbReference>
<dbReference type="GO" id="GO:0003735">
    <property type="term" value="F:structural constituent of ribosome"/>
    <property type="evidence" value="ECO:0007669"/>
    <property type="project" value="InterPro"/>
</dbReference>
<dbReference type="GO" id="GO:0000049">
    <property type="term" value="F:tRNA binding"/>
    <property type="evidence" value="ECO:0007669"/>
    <property type="project" value="UniProtKB-UniRule"/>
</dbReference>
<dbReference type="GO" id="GO:0006412">
    <property type="term" value="P:translation"/>
    <property type="evidence" value="ECO:0007669"/>
    <property type="project" value="UniProtKB-UniRule"/>
</dbReference>
<dbReference type="CDD" id="cd14869">
    <property type="entry name" value="uS7_Bacteria"/>
    <property type="match status" value="1"/>
</dbReference>
<dbReference type="FunFam" id="1.10.455.10:FF:000001">
    <property type="entry name" value="30S ribosomal protein S7"/>
    <property type="match status" value="1"/>
</dbReference>
<dbReference type="Gene3D" id="1.10.455.10">
    <property type="entry name" value="Ribosomal protein S7 domain"/>
    <property type="match status" value="1"/>
</dbReference>
<dbReference type="HAMAP" id="MF_00480_B">
    <property type="entry name" value="Ribosomal_uS7_B"/>
    <property type="match status" value="1"/>
</dbReference>
<dbReference type="InterPro" id="IPR000235">
    <property type="entry name" value="Ribosomal_uS7"/>
</dbReference>
<dbReference type="InterPro" id="IPR005717">
    <property type="entry name" value="Ribosomal_uS7_bac/org-type"/>
</dbReference>
<dbReference type="InterPro" id="IPR020606">
    <property type="entry name" value="Ribosomal_uS7_CS"/>
</dbReference>
<dbReference type="InterPro" id="IPR023798">
    <property type="entry name" value="Ribosomal_uS7_dom"/>
</dbReference>
<dbReference type="InterPro" id="IPR036823">
    <property type="entry name" value="Ribosomal_uS7_dom_sf"/>
</dbReference>
<dbReference type="NCBIfam" id="TIGR01029">
    <property type="entry name" value="rpsG_bact"/>
    <property type="match status" value="1"/>
</dbReference>
<dbReference type="PANTHER" id="PTHR11205">
    <property type="entry name" value="RIBOSOMAL PROTEIN S7"/>
    <property type="match status" value="1"/>
</dbReference>
<dbReference type="Pfam" id="PF00177">
    <property type="entry name" value="Ribosomal_S7"/>
    <property type="match status" value="1"/>
</dbReference>
<dbReference type="PIRSF" id="PIRSF002122">
    <property type="entry name" value="RPS7p_RPS7a_RPS5e_RPS7o"/>
    <property type="match status" value="1"/>
</dbReference>
<dbReference type="SUPFAM" id="SSF47973">
    <property type="entry name" value="Ribosomal protein S7"/>
    <property type="match status" value="1"/>
</dbReference>
<dbReference type="PROSITE" id="PS00052">
    <property type="entry name" value="RIBOSOMAL_S7"/>
    <property type="match status" value="1"/>
</dbReference>
<gene>
    <name evidence="1" type="primary">rpsG</name>
    <name type="ordered locus">Rfer_3799</name>
</gene>
<accession>Q21RV4</accession>
<keyword id="KW-1185">Reference proteome</keyword>
<keyword id="KW-0687">Ribonucleoprotein</keyword>
<keyword id="KW-0689">Ribosomal protein</keyword>
<keyword id="KW-0694">RNA-binding</keyword>
<keyword id="KW-0699">rRNA-binding</keyword>
<keyword id="KW-0820">tRNA-binding</keyword>
<comment type="function">
    <text evidence="1">One of the primary rRNA binding proteins, it binds directly to 16S rRNA where it nucleates assembly of the head domain of the 30S subunit. Is located at the subunit interface close to the decoding center, probably blocks exit of the E-site tRNA.</text>
</comment>
<comment type="subunit">
    <text evidence="1">Part of the 30S ribosomal subunit. Contacts proteins S9 and S11.</text>
</comment>
<comment type="similarity">
    <text evidence="1">Belongs to the universal ribosomal protein uS7 family.</text>
</comment>
<reference key="1">
    <citation type="submission" date="2006-02" db="EMBL/GenBank/DDBJ databases">
        <title>Complete sequence of chromosome of Rhodoferax ferrireducens DSM 15236.</title>
        <authorList>
            <person name="Copeland A."/>
            <person name="Lucas S."/>
            <person name="Lapidus A."/>
            <person name="Barry K."/>
            <person name="Detter J.C."/>
            <person name="Glavina del Rio T."/>
            <person name="Hammon N."/>
            <person name="Israni S."/>
            <person name="Pitluck S."/>
            <person name="Brettin T."/>
            <person name="Bruce D."/>
            <person name="Han C."/>
            <person name="Tapia R."/>
            <person name="Gilna P."/>
            <person name="Kiss H."/>
            <person name="Schmutz J."/>
            <person name="Larimer F."/>
            <person name="Land M."/>
            <person name="Kyrpides N."/>
            <person name="Ivanova N."/>
            <person name="Richardson P."/>
        </authorList>
    </citation>
    <scope>NUCLEOTIDE SEQUENCE [LARGE SCALE GENOMIC DNA]</scope>
    <source>
        <strain>ATCC BAA-621 / DSM 15236 / T118</strain>
    </source>
</reference>
<proteinExistence type="inferred from homology"/>
<feature type="chain" id="PRO_0000241770" description="Small ribosomal subunit protein uS7">
    <location>
        <begin position="1"/>
        <end position="157"/>
    </location>
</feature>
<organism>
    <name type="scientific">Albidiferax ferrireducens (strain ATCC BAA-621 / DSM 15236 / T118)</name>
    <name type="common">Rhodoferax ferrireducens</name>
    <dbReference type="NCBI Taxonomy" id="338969"/>
    <lineage>
        <taxon>Bacteria</taxon>
        <taxon>Pseudomonadati</taxon>
        <taxon>Pseudomonadota</taxon>
        <taxon>Betaproteobacteria</taxon>
        <taxon>Burkholderiales</taxon>
        <taxon>Comamonadaceae</taxon>
        <taxon>Rhodoferax</taxon>
    </lineage>
</organism>
<protein>
    <recommendedName>
        <fullName evidence="1">Small ribosomal subunit protein uS7</fullName>
    </recommendedName>
    <alternativeName>
        <fullName evidence="2">30S ribosomal protein S7</fullName>
    </alternativeName>
</protein>
<sequence>MPRRREVPKREILPDPKFGNVELSKFMNVIMEGGKKAIAERIIYGALEQIEKKNPGKDPVEAFTMAINNVKPMVEVKSRRVGGSNYQVPVEVRPVRRLALSMRWIKEAARKRGEKSMALRLANELMEATEGRGGAMKKRDEVHRMAEANKAFSHFRF</sequence>
<evidence type="ECO:0000255" key="1">
    <source>
        <dbReference type="HAMAP-Rule" id="MF_00480"/>
    </source>
</evidence>
<evidence type="ECO:0000305" key="2"/>